<evidence type="ECO:0000256" key="1">
    <source>
        <dbReference type="SAM" id="MobiDB-lite"/>
    </source>
</evidence>
<accession>P22296</accession>
<proteinExistence type="predicted"/>
<protein>
    <recommendedName>
        <fullName>Uncharacterized protein in hlv 3'region</fullName>
    </recommendedName>
    <alternativeName>
        <fullName>ORF4</fullName>
    </alternativeName>
</protein>
<dbReference type="EMBL" id="M59360">
    <property type="protein sequence ID" value="AAA63275.1"/>
    <property type="molecule type" value="Genomic_DNA"/>
</dbReference>
<dbReference type="PIR" id="D37145">
    <property type="entry name" value="D37145"/>
</dbReference>
<sequence>MHNSIAYDKDGNSTGQKYYAYG</sequence>
<name>YHV4_LACHE</name>
<organism>
    <name type="scientific">Lactobacillus helveticus</name>
    <name type="common">Lactobacillus suntoryeus</name>
    <dbReference type="NCBI Taxonomy" id="1587"/>
    <lineage>
        <taxon>Bacteria</taxon>
        <taxon>Bacillati</taxon>
        <taxon>Bacillota</taxon>
        <taxon>Bacilli</taxon>
        <taxon>Lactobacillales</taxon>
        <taxon>Lactobacillaceae</taxon>
        <taxon>Lactobacillus</taxon>
    </lineage>
</organism>
<feature type="chain" id="PRO_0000066260" description="Uncharacterized protein in hlv 3'region">
    <location>
        <begin position="1"/>
        <end position="22" status="greater than"/>
    </location>
</feature>
<feature type="region of interest" description="Disordered" evidence="1">
    <location>
        <begin position="1"/>
        <end position="22"/>
    </location>
</feature>
<feature type="non-terminal residue">
    <location>
        <position position="22"/>
    </location>
</feature>
<reference key="1">
    <citation type="journal article" date="1990" name="J. Bacteriol.">
        <title>Cloning, expression, and nucleotide sequence of the Lactobacillus helveticus 481 gene encoding the bacteriocin helveticin J.</title>
        <authorList>
            <person name="Joerger M.C."/>
            <person name="Klaenhammer T.R."/>
        </authorList>
    </citation>
    <scope>NUCLEOTIDE SEQUENCE [GENOMIC DNA]</scope>
    <source>
        <strain>481</strain>
    </source>
</reference>